<comment type="function">
    <text evidence="1">Catalyzes the NADPH-dependent reduction of beta-ketoacyl-ACP substrates to beta-hydroxyacyl-ACP products, the first reductive step in the elongation cycle of fatty acid biosynthesis.</text>
</comment>
<comment type="catalytic activity">
    <reaction>
        <text>a (3R)-hydroxyacyl-[ACP] + NADP(+) = a 3-oxoacyl-[ACP] + NADPH + H(+)</text>
        <dbReference type="Rhea" id="RHEA:17397"/>
        <dbReference type="Rhea" id="RHEA-COMP:9916"/>
        <dbReference type="Rhea" id="RHEA-COMP:9945"/>
        <dbReference type="ChEBI" id="CHEBI:15378"/>
        <dbReference type="ChEBI" id="CHEBI:57783"/>
        <dbReference type="ChEBI" id="CHEBI:58349"/>
        <dbReference type="ChEBI" id="CHEBI:78776"/>
        <dbReference type="ChEBI" id="CHEBI:78827"/>
        <dbReference type="EC" id="1.1.1.100"/>
    </reaction>
</comment>
<comment type="pathway">
    <text>Lipid metabolism; fatty acid biosynthesis.</text>
</comment>
<comment type="subunit">
    <text evidence="1">Homotetramer.</text>
</comment>
<comment type="similarity">
    <text evidence="3">Belongs to the short-chain dehydrogenases/reductases (SDR) family.</text>
</comment>
<evidence type="ECO:0000250" key="1"/>
<evidence type="ECO:0000255" key="2">
    <source>
        <dbReference type="PROSITE-ProRule" id="PRU10001"/>
    </source>
</evidence>
<evidence type="ECO:0000305" key="3"/>
<keyword id="KW-0275">Fatty acid biosynthesis</keyword>
<keyword id="KW-0276">Fatty acid metabolism</keyword>
<keyword id="KW-0444">Lipid biosynthesis</keyword>
<keyword id="KW-0443">Lipid metabolism</keyword>
<keyword id="KW-0521">NADP</keyword>
<keyword id="KW-0560">Oxidoreductase</keyword>
<dbReference type="EC" id="1.1.1.100"/>
<dbReference type="EMBL" id="AE017197">
    <property type="protein sequence ID" value="AAU04205.1"/>
    <property type="molecule type" value="Genomic_DNA"/>
</dbReference>
<dbReference type="RefSeq" id="WP_011191181.1">
    <property type="nucleotide sequence ID" value="NC_006142.1"/>
</dbReference>
<dbReference type="SMR" id="Q68VY7"/>
<dbReference type="KEGG" id="rty:RT0748"/>
<dbReference type="eggNOG" id="COG1028">
    <property type="taxonomic scope" value="Bacteria"/>
</dbReference>
<dbReference type="HOGENOM" id="CLU_010194_1_3_5"/>
<dbReference type="OrthoDB" id="9804774at2"/>
<dbReference type="UniPathway" id="UPA00094"/>
<dbReference type="Proteomes" id="UP000000604">
    <property type="component" value="Chromosome"/>
</dbReference>
<dbReference type="GO" id="GO:0004316">
    <property type="term" value="F:3-oxoacyl-[acyl-carrier-protein] reductase (NADPH) activity"/>
    <property type="evidence" value="ECO:0000250"/>
    <property type="project" value="UniProtKB"/>
</dbReference>
<dbReference type="GO" id="GO:0051287">
    <property type="term" value="F:NAD binding"/>
    <property type="evidence" value="ECO:0007669"/>
    <property type="project" value="InterPro"/>
</dbReference>
<dbReference type="GO" id="GO:0050661">
    <property type="term" value="F:NADP binding"/>
    <property type="evidence" value="ECO:0000250"/>
    <property type="project" value="UniProtKB"/>
</dbReference>
<dbReference type="GO" id="GO:0030497">
    <property type="term" value="P:fatty acid elongation"/>
    <property type="evidence" value="ECO:0000250"/>
    <property type="project" value="UniProtKB"/>
</dbReference>
<dbReference type="CDD" id="cd05333">
    <property type="entry name" value="BKR_SDR_c"/>
    <property type="match status" value="1"/>
</dbReference>
<dbReference type="FunFam" id="3.40.50.720:FF:000806">
    <property type="entry name" value="3-oxoacyl-[acyl-carrier-protein] reductase FabG"/>
    <property type="match status" value="1"/>
</dbReference>
<dbReference type="Gene3D" id="3.40.50.720">
    <property type="entry name" value="NAD(P)-binding Rossmann-like Domain"/>
    <property type="match status" value="1"/>
</dbReference>
<dbReference type="InterPro" id="IPR011284">
    <property type="entry name" value="3oxo_ACP_reduc"/>
</dbReference>
<dbReference type="InterPro" id="IPR036291">
    <property type="entry name" value="NAD(P)-bd_dom_sf"/>
</dbReference>
<dbReference type="InterPro" id="IPR020904">
    <property type="entry name" value="Sc_DH/Rdtase_CS"/>
</dbReference>
<dbReference type="InterPro" id="IPR050259">
    <property type="entry name" value="SDR"/>
</dbReference>
<dbReference type="InterPro" id="IPR002347">
    <property type="entry name" value="SDR_fam"/>
</dbReference>
<dbReference type="NCBIfam" id="TIGR01830">
    <property type="entry name" value="3oxo_ACP_reduc"/>
    <property type="match status" value="1"/>
</dbReference>
<dbReference type="NCBIfam" id="NF004199">
    <property type="entry name" value="PRK05653.1-4"/>
    <property type="match status" value="1"/>
</dbReference>
<dbReference type="NCBIfam" id="NF009466">
    <property type="entry name" value="PRK12826.1-2"/>
    <property type="match status" value="1"/>
</dbReference>
<dbReference type="PANTHER" id="PTHR42879">
    <property type="entry name" value="3-OXOACYL-(ACYL-CARRIER-PROTEIN) REDUCTASE"/>
    <property type="match status" value="1"/>
</dbReference>
<dbReference type="PANTHER" id="PTHR42879:SF2">
    <property type="entry name" value="3-OXOACYL-[ACYL-CARRIER-PROTEIN] REDUCTASE FABG"/>
    <property type="match status" value="1"/>
</dbReference>
<dbReference type="Pfam" id="PF13561">
    <property type="entry name" value="adh_short_C2"/>
    <property type="match status" value="1"/>
</dbReference>
<dbReference type="PRINTS" id="PR00081">
    <property type="entry name" value="GDHRDH"/>
</dbReference>
<dbReference type="PRINTS" id="PR00080">
    <property type="entry name" value="SDRFAMILY"/>
</dbReference>
<dbReference type="SUPFAM" id="SSF51735">
    <property type="entry name" value="NAD(P)-binding Rossmann-fold domains"/>
    <property type="match status" value="1"/>
</dbReference>
<dbReference type="PROSITE" id="PS00061">
    <property type="entry name" value="ADH_SHORT"/>
    <property type="match status" value="1"/>
</dbReference>
<protein>
    <recommendedName>
        <fullName>3-oxoacyl-[acyl-carrier-protein] reductase FabG</fullName>
        <ecNumber>1.1.1.100</ecNumber>
    </recommendedName>
    <alternativeName>
        <fullName>3-ketoacyl-acyl carrier protein reductase</fullName>
    </alternativeName>
    <alternativeName>
        <fullName>Beta-Ketoacyl-acyl carrier protein reductase</fullName>
    </alternativeName>
    <alternativeName>
        <fullName>Beta-ketoacyl-ACP reductase</fullName>
    </alternativeName>
</protein>
<reference key="1">
    <citation type="journal article" date="2004" name="J. Bacteriol.">
        <title>Complete genome sequence of Rickettsia typhi and comparison with sequences of other Rickettsiae.</title>
        <authorList>
            <person name="McLeod M.P."/>
            <person name="Qin X."/>
            <person name="Karpathy S.E."/>
            <person name="Gioia J."/>
            <person name="Highlander S.K."/>
            <person name="Fox G.E."/>
            <person name="McNeill T.Z."/>
            <person name="Jiang H."/>
            <person name="Muzny D."/>
            <person name="Jacob L.S."/>
            <person name="Hawes A.C."/>
            <person name="Sodergren E."/>
            <person name="Gill R."/>
            <person name="Hume J."/>
            <person name="Morgan M."/>
            <person name="Fan G."/>
            <person name="Amin A.G."/>
            <person name="Gibbs R.A."/>
            <person name="Hong C."/>
            <person name="Yu X.-J."/>
            <person name="Walker D.H."/>
            <person name="Weinstock G.M."/>
        </authorList>
    </citation>
    <scope>NUCLEOTIDE SEQUENCE [LARGE SCALE GENOMIC DNA]</scope>
    <source>
        <strain>ATCC VR-144 / Wilmington</strain>
    </source>
</reference>
<name>FABG_RICTY</name>
<gene>
    <name type="primary">fabG</name>
    <name type="ordered locus">RT0748</name>
</gene>
<sequence>MIDFTGKTSLITGASGGIGSAIARLLHKLGSKVIISGSNEKKLKLLGNTLKDNYIIEVCNLANKEECNNLISKISNLDILVCNAGITSDTLAIRMKDQDFDKVIDINLKANFILNREAIKKMIQKRYGRIINISSIVGIAGNPGQANYCASKAGLIGMTKSLSYEVATRGITVNAVAPGFIKSDMTDKLNEKQREAIVQKIPLGTYGIPEDVAYAVAFLASNHASYITGQTLHVNGGMLMV</sequence>
<proteinExistence type="inferred from homology"/>
<organism>
    <name type="scientific">Rickettsia typhi (strain ATCC VR-144 / Wilmington)</name>
    <dbReference type="NCBI Taxonomy" id="257363"/>
    <lineage>
        <taxon>Bacteria</taxon>
        <taxon>Pseudomonadati</taxon>
        <taxon>Pseudomonadota</taxon>
        <taxon>Alphaproteobacteria</taxon>
        <taxon>Rickettsiales</taxon>
        <taxon>Rickettsiaceae</taxon>
        <taxon>Rickettsieae</taxon>
        <taxon>Rickettsia</taxon>
        <taxon>typhus group</taxon>
    </lineage>
</organism>
<accession>Q68VY7</accession>
<feature type="chain" id="PRO_0000286634" description="3-oxoacyl-[acyl-carrier-protein] reductase FabG">
    <location>
        <begin position="1"/>
        <end position="241"/>
    </location>
</feature>
<feature type="active site" description="Proton acceptor" evidence="2">
    <location>
        <position position="148"/>
    </location>
</feature>
<feature type="binding site" evidence="1">
    <location>
        <begin position="13"/>
        <end position="16"/>
    </location>
    <ligand>
        <name>NADP(+)</name>
        <dbReference type="ChEBI" id="CHEBI:58349"/>
    </ligand>
</feature>
<feature type="binding site" evidence="1">
    <location>
        <position position="38"/>
    </location>
    <ligand>
        <name>NADP(+)</name>
        <dbReference type="ChEBI" id="CHEBI:58349"/>
    </ligand>
</feature>
<feature type="binding site" evidence="1">
    <location>
        <begin position="57"/>
        <end position="58"/>
    </location>
    <ligand>
        <name>NADP(+)</name>
        <dbReference type="ChEBI" id="CHEBI:58349"/>
    </ligand>
</feature>
<feature type="binding site" evidence="1">
    <location>
        <position position="83"/>
    </location>
    <ligand>
        <name>NADP(+)</name>
        <dbReference type="ChEBI" id="CHEBI:58349"/>
    </ligand>
</feature>
<feature type="binding site" evidence="1">
    <location>
        <position position="135"/>
    </location>
    <ligand>
        <name>substrate</name>
    </ligand>
</feature>
<feature type="binding site" evidence="1">
    <location>
        <begin position="148"/>
        <end position="152"/>
    </location>
    <ligand>
        <name>NADP(+)</name>
        <dbReference type="ChEBI" id="CHEBI:58349"/>
    </ligand>
</feature>
<feature type="binding site" evidence="1">
    <location>
        <position position="181"/>
    </location>
    <ligand>
        <name>NADP(+)</name>
        <dbReference type="ChEBI" id="CHEBI:58349"/>
    </ligand>
</feature>